<protein>
    <recommendedName>
        <fullName evidence="1">Histidine--tRNA ligase</fullName>
        <ecNumber evidence="1">6.1.1.21</ecNumber>
    </recommendedName>
    <alternativeName>
        <fullName evidence="1">Histidyl-tRNA synthetase</fullName>
        <shortName evidence="1">HisRS</shortName>
    </alternativeName>
</protein>
<reference key="1">
    <citation type="journal article" date="2007" name="Environ. Microbiol.">
        <title>Whole-genome analysis of the ammonia-oxidizing bacterium, Nitrosomonas eutropha C91: implications for niche adaptation.</title>
        <authorList>
            <person name="Stein L.Y."/>
            <person name="Arp D.J."/>
            <person name="Berube P.M."/>
            <person name="Chain P.S."/>
            <person name="Hauser L."/>
            <person name="Jetten M.S."/>
            <person name="Klotz M.G."/>
            <person name="Larimer F.W."/>
            <person name="Norton J.M."/>
            <person name="Op den Camp H.J.M."/>
            <person name="Shin M."/>
            <person name="Wei X."/>
        </authorList>
    </citation>
    <scope>NUCLEOTIDE SEQUENCE [LARGE SCALE GENOMIC DNA]</scope>
    <source>
        <strain>DSM 101675 / C91 / Nm57</strain>
    </source>
</reference>
<dbReference type="EC" id="6.1.1.21" evidence="1"/>
<dbReference type="EMBL" id="CP000450">
    <property type="protein sequence ID" value="ABI60389.1"/>
    <property type="molecule type" value="Genomic_DNA"/>
</dbReference>
<dbReference type="RefSeq" id="WP_011635186.1">
    <property type="nucleotide sequence ID" value="NC_008344.1"/>
</dbReference>
<dbReference type="SMR" id="Q0AE43"/>
<dbReference type="STRING" id="335283.Neut_2167"/>
<dbReference type="KEGG" id="net:Neut_2167"/>
<dbReference type="eggNOG" id="COG0124">
    <property type="taxonomic scope" value="Bacteria"/>
</dbReference>
<dbReference type="HOGENOM" id="CLU_025113_1_1_4"/>
<dbReference type="OrthoDB" id="9800814at2"/>
<dbReference type="Proteomes" id="UP000001966">
    <property type="component" value="Chromosome"/>
</dbReference>
<dbReference type="GO" id="GO:0005737">
    <property type="term" value="C:cytoplasm"/>
    <property type="evidence" value="ECO:0007669"/>
    <property type="project" value="UniProtKB-SubCell"/>
</dbReference>
<dbReference type="GO" id="GO:0005524">
    <property type="term" value="F:ATP binding"/>
    <property type="evidence" value="ECO:0007669"/>
    <property type="project" value="UniProtKB-UniRule"/>
</dbReference>
<dbReference type="GO" id="GO:0004821">
    <property type="term" value="F:histidine-tRNA ligase activity"/>
    <property type="evidence" value="ECO:0007669"/>
    <property type="project" value="UniProtKB-UniRule"/>
</dbReference>
<dbReference type="GO" id="GO:0006427">
    <property type="term" value="P:histidyl-tRNA aminoacylation"/>
    <property type="evidence" value="ECO:0007669"/>
    <property type="project" value="UniProtKB-UniRule"/>
</dbReference>
<dbReference type="CDD" id="cd00773">
    <property type="entry name" value="HisRS-like_core"/>
    <property type="match status" value="1"/>
</dbReference>
<dbReference type="CDD" id="cd00859">
    <property type="entry name" value="HisRS_anticodon"/>
    <property type="match status" value="1"/>
</dbReference>
<dbReference type="FunFam" id="3.30.930.10:FF:000005">
    <property type="entry name" value="Histidine--tRNA ligase"/>
    <property type="match status" value="1"/>
</dbReference>
<dbReference type="Gene3D" id="3.40.50.800">
    <property type="entry name" value="Anticodon-binding domain"/>
    <property type="match status" value="1"/>
</dbReference>
<dbReference type="Gene3D" id="3.30.930.10">
    <property type="entry name" value="Bira Bifunctional Protein, Domain 2"/>
    <property type="match status" value="1"/>
</dbReference>
<dbReference type="HAMAP" id="MF_00127">
    <property type="entry name" value="His_tRNA_synth"/>
    <property type="match status" value="1"/>
</dbReference>
<dbReference type="InterPro" id="IPR006195">
    <property type="entry name" value="aa-tRNA-synth_II"/>
</dbReference>
<dbReference type="InterPro" id="IPR045864">
    <property type="entry name" value="aa-tRNA-synth_II/BPL/LPL"/>
</dbReference>
<dbReference type="InterPro" id="IPR004154">
    <property type="entry name" value="Anticodon-bd"/>
</dbReference>
<dbReference type="InterPro" id="IPR036621">
    <property type="entry name" value="Anticodon-bd_dom_sf"/>
</dbReference>
<dbReference type="InterPro" id="IPR015807">
    <property type="entry name" value="His-tRNA-ligase"/>
</dbReference>
<dbReference type="InterPro" id="IPR041715">
    <property type="entry name" value="HisRS-like_core"/>
</dbReference>
<dbReference type="InterPro" id="IPR004516">
    <property type="entry name" value="HisRS/HisZ"/>
</dbReference>
<dbReference type="InterPro" id="IPR033656">
    <property type="entry name" value="HisRS_anticodon"/>
</dbReference>
<dbReference type="NCBIfam" id="TIGR00442">
    <property type="entry name" value="hisS"/>
    <property type="match status" value="1"/>
</dbReference>
<dbReference type="PANTHER" id="PTHR43707:SF1">
    <property type="entry name" value="HISTIDINE--TRNA LIGASE, MITOCHONDRIAL-RELATED"/>
    <property type="match status" value="1"/>
</dbReference>
<dbReference type="PANTHER" id="PTHR43707">
    <property type="entry name" value="HISTIDYL-TRNA SYNTHETASE"/>
    <property type="match status" value="1"/>
</dbReference>
<dbReference type="Pfam" id="PF03129">
    <property type="entry name" value="HGTP_anticodon"/>
    <property type="match status" value="1"/>
</dbReference>
<dbReference type="Pfam" id="PF13393">
    <property type="entry name" value="tRNA-synt_His"/>
    <property type="match status" value="1"/>
</dbReference>
<dbReference type="PIRSF" id="PIRSF001549">
    <property type="entry name" value="His-tRNA_synth"/>
    <property type="match status" value="1"/>
</dbReference>
<dbReference type="SUPFAM" id="SSF52954">
    <property type="entry name" value="Class II aaRS ABD-related"/>
    <property type="match status" value="1"/>
</dbReference>
<dbReference type="SUPFAM" id="SSF55681">
    <property type="entry name" value="Class II aaRS and biotin synthetases"/>
    <property type="match status" value="1"/>
</dbReference>
<dbReference type="PROSITE" id="PS50862">
    <property type="entry name" value="AA_TRNA_LIGASE_II"/>
    <property type="match status" value="1"/>
</dbReference>
<proteinExistence type="inferred from homology"/>
<comment type="catalytic activity">
    <reaction evidence="1">
        <text>tRNA(His) + L-histidine + ATP = L-histidyl-tRNA(His) + AMP + diphosphate + H(+)</text>
        <dbReference type="Rhea" id="RHEA:17313"/>
        <dbReference type="Rhea" id="RHEA-COMP:9665"/>
        <dbReference type="Rhea" id="RHEA-COMP:9689"/>
        <dbReference type="ChEBI" id="CHEBI:15378"/>
        <dbReference type="ChEBI" id="CHEBI:30616"/>
        <dbReference type="ChEBI" id="CHEBI:33019"/>
        <dbReference type="ChEBI" id="CHEBI:57595"/>
        <dbReference type="ChEBI" id="CHEBI:78442"/>
        <dbReference type="ChEBI" id="CHEBI:78527"/>
        <dbReference type="ChEBI" id="CHEBI:456215"/>
        <dbReference type="EC" id="6.1.1.21"/>
    </reaction>
</comment>
<comment type="subunit">
    <text evidence="1">Homodimer.</text>
</comment>
<comment type="subcellular location">
    <subcellularLocation>
        <location evidence="1">Cytoplasm</location>
    </subcellularLocation>
</comment>
<comment type="similarity">
    <text evidence="1">Belongs to the class-II aminoacyl-tRNA synthetase family.</text>
</comment>
<keyword id="KW-0030">Aminoacyl-tRNA synthetase</keyword>
<keyword id="KW-0067">ATP-binding</keyword>
<keyword id="KW-0963">Cytoplasm</keyword>
<keyword id="KW-0436">Ligase</keyword>
<keyword id="KW-0547">Nucleotide-binding</keyword>
<keyword id="KW-0648">Protein biosynthesis</keyword>
<name>SYH_NITEC</name>
<gene>
    <name evidence="1" type="primary">hisS</name>
    <name type="ordered locus">Neut_2167</name>
</gene>
<evidence type="ECO:0000255" key="1">
    <source>
        <dbReference type="HAMAP-Rule" id="MF_00127"/>
    </source>
</evidence>
<organism>
    <name type="scientific">Nitrosomonas eutropha (strain DSM 101675 / C91 / Nm57)</name>
    <dbReference type="NCBI Taxonomy" id="335283"/>
    <lineage>
        <taxon>Bacteria</taxon>
        <taxon>Pseudomonadati</taxon>
        <taxon>Pseudomonadota</taxon>
        <taxon>Betaproteobacteria</taxon>
        <taxon>Nitrosomonadales</taxon>
        <taxon>Nitrosomonadaceae</taxon>
        <taxon>Nitrosomonas</taxon>
    </lineage>
</organism>
<feature type="chain" id="PRO_1000016403" description="Histidine--tRNA ligase">
    <location>
        <begin position="1"/>
        <end position="421"/>
    </location>
</feature>
<accession>Q0AE43</accession>
<sequence>MPEAIRAVRGMNDILPDESDLWGFFEDTIRTWLAAYGYRNLRTPIVEQTDLFVRSIGEVTDIVEKEMYSFIDQLNGENLTLRPEGTASCVRAVIEHNLLYSGPQRLYYSGPMFRHERPQKGRYRQFHQVGVEALGFVGPDIDAELIIMCARLWRLLGIPDVRLEISTLGSIESRLIYRARLISYLEKFYDELDEDARRRLKTNPLRILDSKNPGMREILEGAPHLFDDLDEDSLIHFDALQRILRNQGISFEINHRLVRGLDYYNRTVFEWVTDKLGAQGTICAGGRYDGLIAQIGGKPAPACGFAMGIERILSLISETDVAAEIHTVPDVYVVHQGDIAAGFSWKVAESLRDAGFKVVLHSGGGSFKAQMKKADASGARFAAIIGDDEAATGQVSIKSLREAVEQVKIDLTKVAVFLENI</sequence>